<evidence type="ECO:0000250" key="1">
    <source>
        <dbReference type="UniProtKB" id="P07374"/>
    </source>
</evidence>
<evidence type="ECO:0000255" key="2">
    <source>
        <dbReference type="PROSITE-ProRule" id="PRU00700"/>
    </source>
</evidence>
<evidence type="ECO:0000269" key="3">
    <source>
    </source>
</evidence>
<evidence type="ECO:0000303" key="4">
    <source>
    </source>
</evidence>
<evidence type="ECO:0000303" key="5">
    <source>
    </source>
</evidence>
<evidence type="ECO:0000305" key="6"/>
<evidence type="ECO:0000305" key="7">
    <source>
    </source>
</evidence>
<evidence type="ECO:0000312" key="8">
    <source>
        <dbReference type="EMBL" id="KRH31451.1"/>
    </source>
</evidence>
<organism>
    <name type="scientific">Glycine max</name>
    <name type="common">Soybean</name>
    <name type="synonym">Glycine hispida</name>
    <dbReference type="NCBI Taxonomy" id="3847"/>
    <lineage>
        <taxon>Eukaryota</taxon>
        <taxon>Viridiplantae</taxon>
        <taxon>Streptophyta</taxon>
        <taxon>Embryophyta</taxon>
        <taxon>Tracheophyta</taxon>
        <taxon>Spermatophyta</taxon>
        <taxon>Magnoliopsida</taxon>
        <taxon>eudicotyledons</taxon>
        <taxon>Gunneridae</taxon>
        <taxon>Pentapetalae</taxon>
        <taxon>rosids</taxon>
        <taxon>fabids</taxon>
        <taxon>Fabales</taxon>
        <taxon>Fabaceae</taxon>
        <taxon>Papilionoideae</taxon>
        <taxon>50 kb inversion clade</taxon>
        <taxon>NPAAA clade</taxon>
        <taxon>indigoferoid/millettioid clade</taxon>
        <taxon>Phaseoleae</taxon>
        <taxon>Glycine</taxon>
        <taxon>Glycine subgen. Soja</taxon>
    </lineage>
</organism>
<reference key="1">
    <citation type="submission" date="2000-04" db="EMBL/GenBank/DDBJ databases">
        <title>Characterisation of urease from soybean.</title>
        <authorList>
            <person name="Witte C.P."/>
            <person name="Tiller S."/>
            <person name="Davies H.V."/>
            <person name="Taylor M.A."/>
        </authorList>
    </citation>
    <scope>NUCLEOTIDE SEQUENCE [MRNA]</scope>
</reference>
<reference key="2">
    <citation type="journal article" date="2003" name="Plant Physiol.">
        <title>Interallelic complementation at the ubiquitous urease coding locus of soybean.</title>
        <authorList>
            <person name="Goldraij A."/>
            <person name="Beamer L.J."/>
            <person name="Polacco J.C."/>
        </authorList>
    </citation>
    <scope>NUCLEOTIDE SEQUENCE [MRNA]</scope>
</reference>
<reference key="3">
    <citation type="journal article" date="2010" name="Nature">
        <title>Genome sequence of the palaeopolyploid soybean.</title>
        <authorList>
            <person name="Schmutz J."/>
            <person name="Cannon S.B."/>
            <person name="Schlueter J."/>
            <person name="Ma J."/>
            <person name="Mitros T."/>
            <person name="Nelson W."/>
            <person name="Hyten D.L."/>
            <person name="Song Q."/>
            <person name="Thelen J.J."/>
            <person name="Cheng J."/>
            <person name="Xu D."/>
            <person name="Hellsten U."/>
            <person name="May G.D."/>
            <person name="Yu Y."/>
            <person name="Sakurai T."/>
            <person name="Umezawa T."/>
            <person name="Bhattacharyya M.K."/>
            <person name="Sandhu D."/>
            <person name="Valliyodan B."/>
            <person name="Lindquist E."/>
            <person name="Peto M."/>
            <person name="Grant D."/>
            <person name="Shu S."/>
            <person name="Goodstein D."/>
            <person name="Barry K."/>
            <person name="Futrell-Griggs M."/>
            <person name="Abernathy B."/>
            <person name="Du J."/>
            <person name="Tian Z."/>
            <person name="Zhu L."/>
            <person name="Gill N."/>
            <person name="Joshi T."/>
            <person name="Libault M."/>
            <person name="Sethuraman A."/>
            <person name="Zhang X.-C."/>
            <person name="Shinozaki K."/>
            <person name="Nguyen H.T."/>
            <person name="Wing R.A."/>
            <person name="Cregan P."/>
            <person name="Specht J."/>
            <person name="Grimwood J."/>
            <person name="Rokhsar D."/>
            <person name="Stacey G."/>
            <person name="Shoemaker R.C."/>
            <person name="Jackson S.A."/>
        </authorList>
    </citation>
    <scope>NUCLEOTIDE SEQUENCE [LARGE SCALE GENOMIC DNA]</scope>
    <source>
        <strain>cv. Williams 82</strain>
    </source>
</reference>
<reference key="4">
    <citation type="journal article" date="1987" name="Gene">
        <title>Recovery of a soybean urease genomic clone by sequential library screening with two synthetic oligodeoxynucleotides.</title>
        <authorList>
            <person name="Krueger R.W."/>
            <person name="Holland M.A."/>
            <person name="Chisholm D."/>
            <person name="Polacco J.C."/>
        </authorList>
    </citation>
    <scope>NUCLEOTIDE SEQUENCE [GENOMIC DNA] OF 641-769</scope>
</reference>
<reference key="5">
    <citation type="journal article" date="2012" name="Plant Mol. Biol.">
        <title>Ubiquitous urease affects soybean susceptibility to fungi.</title>
        <authorList>
            <person name="Wiebke-Strohm B."/>
            <person name="Pasquali G."/>
            <person name="Margis-Pinheiro M."/>
            <person name="Bencke M."/>
            <person name="Buecker-Neto L."/>
            <person name="Becker-Ritt A.B."/>
            <person name="Martinelli A.H."/>
            <person name="Rechenmacher C."/>
            <person name="Polacco J.C."/>
            <person name="Stolf R."/>
            <person name="Marcelino F.C."/>
            <person name="Abdelnoor R.V."/>
            <person name="Homrich M.S."/>
            <person name="Del Ponte E.M."/>
            <person name="Carlini C.R."/>
            <person name="De Carvalho M.C."/>
            <person name="Bodanese-Zanettini M.H."/>
        </authorList>
    </citation>
    <scope>FUNCTION</scope>
    <scope>INDUCTION</scope>
</reference>
<comment type="function">
    <text evidence="3 7">Catalyzes the conversion of urea to ammonia and carbon dioxide, thus allowing organisms to use exogenous and internally generated urea as a nitrogen source (Probable). May be involved in plant defense to pathogenic fungi (PubMed:22382992).</text>
</comment>
<comment type="catalytic activity">
    <reaction evidence="2">
        <text>urea + 2 H2O + H(+) = hydrogencarbonate + 2 NH4(+)</text>
        <dbReference type="Rhea" id="RHEA:20557"/>
        <dbReference type="ChEBI" id="CHEBI:15377"/>
        <dbReference type="ChEBI" id="CHEBI:15378"/>
        <dbReference type="ChEBI" id="CHEBI:16199"/>
        <dbReference type="ChEBI" id="CHEBI:17544"/>
        <dbReference type="ChEBI" id="CHEBI:28938"/>
        <dbReference type="EC" id="3.5.1.5"/>
    </reaction>
</comment>
<comment type="cofactor">
    <cofactor evidence="2">
        <name>Ni(2+)</name>
        <dbReference type="ChEBI" id="CHEBI:49786"/>
    </cofactor>
    <text evidence="2">Binds 2 nickel ions per subunit.</text>
</comment>
<comment type="pathway">
    <text evidence="6">Nitrogen metabolism; urea degradation; CO(2) and NH(3) from urea (urease route): step 1/1.</text>
</comment>
<comment type="subunit">
    <text evidence="1">Homohexamer. Other oligomeric forms may exist depending on pH and presence of salts.</text>
</comment>
<comment type="induction">
    <text evidence="3">Induced by the fungal pathogen Phakopsora pachyrhizi 1 hour after pathogen inoculation, followed by a strong down-regulation at 24 hours and another up-regulation peak at 192 hours.</text>
</comment>
<comment type="PTM">
    <text evidence="1">Carboxylation allows a single lysine to coordinate two nickel ions.</text>
</comment>
<comment type="miscellaneous">
    <text evidence="3">Plants with decreased expression of EU4 exhibit increased susceptibility to the fungal pathogen Phakopsora pachyrhizi.</text>
</comment>
<comment type="similarity">
    <text evidence="6">Belongs to the metallo-dependent hydrolases superfamily. Urease alpha subunit family.</text>
</comment>
<accession>P08298</accession>
<accession>Q949H4</accession>
<feature type="chain" id="PRO_0000067525" description="Urease">
    <location>
        <begin position="1"/>
        <end position="837"/>
    </location>
</feature>
<feature type="domain" description="Urease" evidence="2">
    <location>
        <begin position="400"/>
        <end position="837"/>
    </location>
</feature>
<feature type="active site" description="Proton donor" evidence="2">
    <location>
        <position position="591"/>
    </location>
</feature>
<feature type="binding site" evidence="2">
    <location>
        <position position="405"/>
    </location>
    <ligand>
        <name>Ni(2+)</name>
        <dbReference type="ChEBI" id="CHEBI:49786"/>
        <label>1</label>
    </ligand>
</feature>
<feature type="binding site" evidence="2">
    <location>
        <position position="407"/>
    </location>
    <ligand>
        <name>Ni(2+)</name>
        <dbReference type="ChEBI" id="CHEBI:49786"/>
        <label>1</label>
    </ligand>
</feature>
<feature type="binding site" description="via carbamate group" evidence="2">
    <location>
        <position position="488"/>
    </location>
    <ligand>
        <name>Ni(2+)</name>
        <dbReference type="ChEBI" id="CHEBI:49786"/>
        <label>1</label>
    </ligand>
</feature>
<feature type="binding site" description="via carbamate group" evidence="2">
    <location>
        <position position="488"/>
    </location>
    <ligand>
        <name>Ni(2+)</name>
        <dbReference type="ChEBI" id="CHEBI:49786"/>
        <label>2</label>
    </ligand>
</feature>
<feature type="binding site" evidence="2">
    <location>
        <position position="490"/>
    </location>
    <ligand>
        <name>substrate</name>
    </ligand>
</feature>
<feature type="binding site" evidence="2">
    <location>
        <position position="517"/>
    </location>
    <ligand>
        <name>Ni(2+)</name>
        <dbReference type="ChEBI" id="CHEBI:49786"/>
        <label>2</label>
    </ligand>
</feature>
<feature type="binding site" evidence="2">
    <location>
        <position position="543"/>
    </location>
    <ligand>
        <name>Ni(2+)</name>
        <dbReference type="ChEBI" id="CHEBI:49786"/>
        <label>2</label>
    </ligand>
</feature>
<feature type="binding site" evidence="2">
    <location>
        <position position="631"/>
    </location>
    <ligand>
        <name>Ni(2+)</name>
        <dbReference type="ChEBI" id="CHEBI:49786"/>
        <label>1</label>
    </ligand>
</feature>
<feature type="modified residue" description="N6-carboxylysine" evidence="1">
    <location>
        <position position="488"/>
    </location>
</feature>
<feature type="sequence conflict" description="In Ref. 4; AAA34018." evidence="6" ref="4">
    <original>L</original>
    <variation>F</variation>
    <location>
        <position position="687"/>
    </location>
</feature>
<feature type="sequence conflict" description="In Ref. 4; AAA34018." evidence="6" ref="4">
    <original>AF</original>
    <variation>TL</variation>
    <location>
        <begin position="749"/>
        <end position="750"/>
    </location>
</feature>
<feature type="sequence conflict" description="In Ref. 4; AAA34018." evidence="6" ref="4">
    <original>H</original>
    <variation>L</variation>
    <location>
        <position position="757"/>
    </location>
</feature>
<feature type="sequence conflict" description="In Ref. 4; AAA34018." evidence="6" ref="4">
    <original>ALDE</original>
    <variation>WLNQ</variation>
    <location>
        <begin position="766"/>
        <end position="769"/>
    </location>
</feature>
<sequence>MKLSPREIEKLDLHNAGYLAQKRLARGLRLNYVETVALIATQILEFVRDGEKTVAQLMCIGRELLGRKQVLPAVPHLVESVQVEATFRDGTKLVTIHDLFACENGNLELALFGSFLPVPSLDKFTENEEDHRTPGEIICRSENLILNPRRNAIILRVVNKGDRPIQVGSHYHFIEVNPYLTFDRRKAYGMRLNIAAGNATRFEPGECKSVVLVSIGGNKVIRGGNNIADGPVNDSNCRAAMKAVVTRGFGHVEEENAREGVTGEDYSLTTVISREEYAHKYGPTTGDKIRLGDTDLFAEIEKDFAVYGDECVFGGGKVIRDGMGQSSGHPPEGSLDTVITNAVIIDYTGIIKADIGIKDGLIISTGKAGNPDIMNDVFPNMIIGANTEVIAGEGLIVTAGAIDCHVHFICPQLVYDAVTSGITTLVGGGTGPADGTRATTCTPAPNQMKLMLQSTDDMPLNFGFTGKGNSAKPDELHEIIRAGAMGLKLHEDWGTTPAAIDSCLTVADQYDIQVNIHTDTLNESGFVEHTIAAFKGRTIHTYHSEGAGGGHAPDIIKVCGEKNVLPSSTNPTRPYTHNTIDEHLDMLMVCHHLNKNIPEDVAFAESRIRAETIAAEDILHDKGAISIISSDSQAMGRIGEVISRTWQTADKMKSQRGPLQPGEDNDNFRIKRYVAKYTINPAIANGLSQYVGSVEAGKLADLVLWKPSFFGAKPEMVIKGGEVAYANMGDPNASIPTPEPVIMRPMFGAFGKAGSSHSIAFVSKAALDEGVKASYGLNKRVEAVKNVRKLTKRDMKLNDTLPQITVDPETYTVTADGEVLTCTAAKTVPLSRNYFLF</sequence>
<name>UREA_SOYBN</name>
<dbReference type="EC" id="3.5.1.5" evidence="2"/>
<dbReference type="EMBL" id="AJ276866">
    <property type="protein sequence ID" value="CAC43845.1"/>
    <property type="molecule type" value="mRNA"/>
</dbReference>
<dbReference type="EMBL" id="AY230156">
    <property type="protein sequence ID" value="AAO85883.1"/>
    <property type="molecule type" value="mRNA"/>
</dbReference>
<dbReference type="EMBL" id="CM000844">
    <property type="protein sequence ID" value="KRH31452.1"/>
    <property type="molecule type" value="Genomic_DNA"/>
</dbReference>
<dbReference type="EMBL" id="CM000844">
    <property type="protein sequence ID" value="KRH31451.1"/>
    <property type="molecule type" value="Genomic_DNA"/>
</dbReference>
<dbReference type="EMBL" id="M16772">
    <property type="protein sequence ID" value="AAA34018.1"/>
    <property type="molecule type" value="Genomic_DNA"/>
</dbReference>
<dbReference type="PIR" id="T08993">
    <property type="entry name" value="T08993"/>
</dbReference>
<dbReference type="RefSeq" id="NP_001236214.1">
    <property type="nucleotide sequence ID" value="NM_001249285.1"/>
</dbReference>
<dbReference type="RefSeq" id="XP_006590356.1">
    <property type="nucleotide sequence ID" value="XM_006590293.2"/>
</dbReference>
<dbReference type="SMR" id="P08298"/>
<dbReference type="STRING" id="3847.P08298"/>
<dbReference type="BindingDB" id="P08298"/>
<dbReference type="PaxDb" id="3847-GLYMA11G37250.1"/>
<dbReference type="EnsemblPlants" id="KRH31451">
    <property type="protein sequence ID" value="KRH31451"/>
    <property type="gene ID" value="GLYMA_11G248700"/>
</dbReference>
<dbReference type="EnsemblPlants" id="KRH31452">
    <property type="protein sequence ID" value="KRH31452"/>
    <property type="gene ID" value="GLYMA_11G248700"/>
</dbReference>
<dbReference type="GeneID" id="547672"/>
<dbReference type="Gramene" id="KRH31451">
    <property type="protein sequence ID" value="KRH31451"/>
    <property type="gene ID" value="GLYMA_11G248700"/>
</dbReference>
<dbReference type="Gramene" id="KRH31452">
    <property type="protein sequence ID" value="KRH31452"/>
    <property type="gene ID" value="GLYMA_11G248700"/>
</dbReference>
<dbReference type="KEGG" id="gmx:547672"/>
<dbReference type="eggNOG" id="ENOG502QPKB">
    <property type="taxonomic scope" value="Eukaryota"/>
</dbReference>
<dbReference type="InParanoid" id="P08298"/>
<dbReference type="OMA" id="DTMDGVH"/>
<dbReference type="OrthoDB" id="1708534at2759"/>
<dbReference type="BRENDA" id="3.5.1.5">
    <property type="organism ID" value="2483"/>
</dbReference>
<dbReference type="UniPathway" id="UPA00258">
    <property type="reaction ID" value="UER00370"/>
</dbReference>
<dbReference type="Proteomes" id="UP000008827">
    <property type="component" value="Chromosome 11"/>
</dbReference>
<dbReference type="GO" id="GO:0035550">
    <property type="term" value="C:urease complex"/>
    <property type="evidence" value="ECO:0007669"/>
    <property type="project" value="InterPro"/>
</dbReference>
<dbReference type="GO" id="GO:0016151">
    <property type="term" value="F:nickel cation binding"/>
    <property type="evidence" value="ECO:0007669"/>
    <property type="project" value="InterPro"/>
</dbReference>
<dbReference type="GO" id="GO:0009039">
    <property type="term" value="F:urease activity"/>
    <property type="evidence" value="ECO:0007669"/>
    <property type="project" value="UniProtKB-EC"/>
</dbReference>
<dbReference type="GO" id="GO:0043419">
    <property type="term" value="P:urea catabolic process"/>
    <property type="evidence" value="ECO:0000314"/>
    <property type="project" value="UniProtKB"/>
</dbReference>
<dbReference type="CDD" id="cd00375">
    <property type="entry name" value="Urease_alpha"/>
    <property type="match status" value="1"/>
</dbReference>
<dbReference type="CDD" id="cd00407">
    <property type="entry name" value="Urease_beta"/>
    <property type="match status" value="1"/>
</dbReference>
<dbReference type="CDD" id="cd00390">
    <property type="entry name" value="Urease_gamma"/>
    <property type="match status" value="1"/>
</dbReference>
<dbReference type="FunFam" id="2.10.150.10:FF:000002">
    <property type="entry name" value="Urease"/>
    <property type="match status" value="1"/>
</dbReference>
<dbReference type="FunFam" id="3.30.280.10:FF:000001">
    <property type="entry name" value="Urease subunit alpha"/>
    <property type="match status" value="1"/>
</dbReference>
<dbReference type="Gene3D" id="3.20.20.140">
    <property type="entry name" value="Metal-dependent hydrolases"/>
    <property type="match status" value="1"/>
</dbReference>
<dbReference type="Gene3D" id="2.10.150.10">
    <property type="entry name" value="Urease, beta subunit"/>
    <property type="match status" value="1"/>
</dbReference>
<dbReference type="Gene3D" id="3.30.280.10">
    <property type="entry name" value="Urease, gamma-like subunit"/>
    <property type="match status" value="1"/>
</dbReference>
<dbReference type="Gene3D" id="2.30.40.10">
    <property type="entry name" value="Urease, subunit C, domain 1"/>
    <property type="match status" value="1"/>
</dbReference>
<dbReference type="HAMAP" id="MF_01953">
    <property type="entry name" value="Urease_alpha"/>
    <property type="match status" value="1"/>
</dbReference>
<dbReference type="InterPro" id="IPR006680">
    <property type="entry name" value="Amidohydro-rel"/>
</dbReference>
<dbReference type="InterPro" id="IPR011059">
    <property type="entry name" value="Metal-dep_hydrolase_composite"/>
</dbReference>
<dbReference type="InterPro" id="IPR032466">
    <property type="entry name" value="Metal_Hydrolase"/>
</dbReference>
<dbReference type="InterPro" id="IPR008221">
    <property type="entry name" value="Urease"/>
</dbReference>
<dbReference type="InterPro" id="IPR011612">
    <property type="entry name" value="Urease_alpha_N_dom"/>
</dbReference>
<dbReference type="InterPro" id="IPR050112">
    <property type="entry name" value="Urease_alpha_subunit"/>
</dbReference>
<dbReference type="InterPro" id="IPR017950">
    <property type="entry name" value="Urease_AS"/>
</dbReference>
<dbReference type="InterPro" id="IPR005848">
    <property type="entry name" value="Urease_asu"/>
</dbReference>
<dbReference type="InterPro" id="IPR017951">
    <property type="entry name" value="Urease_asu_c"/>
</dbReference>
<dbReference type="InterPro" id="IPR002019">
    <property type="entry name" value="Urease_beta-like"/>
</dbReference>
<dbReference type="InterPro" id="IPR036461">
    <property type="entry name" value="Urease_betasu_sf"/>
</dbReference>
<dbReference type="InterPro" id="IPR002026">
    <property type="entry name" value="Urease_gamma/gamma-beta_su"/>
</dbReference>
<dbReference type="InterPro" id="IPR036463">
    <property type="entry name" value="Urease_gamma_sf"/>
</dbReference>
<dbReference type="InterPro" id="IPR040881">
    <property type="entry name" value="Urease_linker"/>
</dbReference>
<dbReference type="InterPro" id="IPR029754">
    <property type="entry name" value="Urease_Ni-bd"/>
</dbReference>
<dbReference type="NCBIfam" id="NF009671">
    <property type="entry name" value="PRK13192.1"/>
    <property type="match status" value="1"/>
</dbReference>
<dbReference type="NCBIfam" id="NF009685">
    <property type="entry name" value="PRK13206.1"/>
    <property type="match status" value="1"/>
</dbReference>
<dbReference type="NCBIfam" id="NF009686">
    <property type="entry name" value="PRK13207.1"/>
    <property type="match status" value="1"/>
</dbReference>
<dbReference type="NCBIfam" id="TIGR01792">
    <property type="entry name" value="urease_alph"/>
    <property type="match status" value="1"/>
</dbReference>
<dbReference type="NCBIfam" id="TIGR00192">
    <property type="entry name" value="urease_beta"/>
    <property type="match status" value="1"/>
</dbReference>
<dbReference type="NCBIfam" id="TIGR00193">
    <property type="entry name" value="urease_gam"/>
    <property type="match status" value="1"/>
</dbReference>
<dbReference type="PANTHER" id="PTHR43440">
    <property type="entry name" value="UREASE"/>
    <property type="match status" value="1"/>
</dbReference>
<dbReference type="PANTHER" id="PTHR43440:SF1">
    <property type="entry name" value="UREASE"/>
    <property type="match status" value="1"/>
</dbReference>
<dbReference type="Pfam" id="PF01979">
    <property type="entry name" value="Amidohydro_1"/>
    <property type="match status" value="1"/>
</dbReference>
<dbReference type="Pfam" id="PF00449">
    <property type="entry name" value="Urease_alpha"/>
    <property type="match status" value="1"/>
</dbReference>
<dbReference type="Pfam" id="PF00699">
    <property type="entry name" value="Urease_beta"/>
    <property type="match status" value="1"/>
</dbReference>
<dbReference type="Pfam" id="PF00547">
    <property type="entry name" value="Urease_gamma"/>
    <property type="match status" value="1"/>
</dbReference>
<dbReference type="Pfam" id="PF18473">
    <property type="entry name" value="Urease_linker"/>
    <property type="match status" value="1"/>
</dbReference>
<dbReference type="PIRSF" id="PIRSF001222">
    <property type="entry name" value="Urease"/>
    <property type="match status" value="1"/>
</dbReference>
<dbReference type="PRINTS" id="PR01752">
    <property type="entry name" value="UREASE"/>
</dbReference>
<dbReference type="SUPFAM" id="SSF51338">
    <property type="entry name" value="Composite domain of metallo-dependent hydrolases"/>
    <property type="match status" value="2"/>
</dbReference>
<dbReference type="SUPFAM" id="SSF51556">
    <property type="entry name" value="Metallo-dependent hydrolases"/>
    <property type="match status" value="1"/>
</dbReference>
<dbReference type="SUPFAM" id="SSF51278">
    <property type="entry name" value="Urease, beta-subunit"/>
    <property type="match status" value="1"/>
</dbReference>
<dbReference type="SUPFAM" id="SSF54111">
    <property type="entry name" value="Urease, gamma-subunit"/>
    <property type="match status" value="1"/>
</dbReference>
<dbReference type="PROSITE" id="PS01120">
    <property type="entry name" value="UREASE_1"/>
    <property type="match status" value="1"/>
</dbReference>
<dbReference type="PROSITE" id="PS00145">
    <property type="entry name" value="UREASE_2"/>
    <property type="match status" value="1"/>
</dbReference>
<dbReference type="PROSITE" id="PS51368">
    <property type="entry name" value="UREASE_3"/>
    <property type="match status" value="1"/>
</dbReference>
<keyword id="KW-0378">Hydrolase</keyword>
<keyword id="KW-0479">Metal-binding</keyword>
<keyword id="KW-0533">Nickel</keyword>
<keyword id="KW-1185">Reference proteome</keyword>
<proteinExistence type="evidence at transcript level"/>
<protein>
    <recommendedName>
        <fullName evidence="2">Urease</fullName>
        <ecNumber evidence="2">3.5.1.5</ecNumber>
    </recommendedName>
    <alternativeName>
        <fullName evidence="4">Ubiquitous urease</fullName>
    </alternativeName>
    <alternativeName>
        <fullName evidence="2">Urea amidohydrolase</fullName>
    </alternativeName>
</protein>
<gene>
    <name evidence="5" type="primary">EU4</name>
    <name evidence="8" type="ORF">GLYMA_11G248700</name>
</gene>